<sequence>MEKPDPKVIVAIDAGTVEQARAQINPLTPELCHLKIGSILFTRYGPAFVEELMQKGYRIFLDLKFYDIPQTVAGACRAVAELGVWMMNIHISGGRTMMETVVNALQSITLKEKPLLIGVTILTSLDGSDLKTLGIQEKVPDIVCRMATLAKSAGLDGVVCSAQEAALLRKQFDRNFLLVTPGIRLETDEKGDQKRVMTPRAAIQAGSDYLVIGRPITQSTDPLKALEAIDKDIKTR</sequence>
<protein>
    <recommendedName>
        <fullName evidence="1">Orotidine 5'-phosphate decarboxylase</fullName>
        <ecNumber evidence="1">4.1.1.23</ecNumber>
    </recommendedName>
    <alternativeName>
        <fullName evidence="1">OMP decarboxylase</fullName>
        <shortName evidence="1">OMPDCase</shortName>
        <shortName evidence="1">OMPdecase</shortName>
    </alternativeName>
</protein>
<gene>
    <name evidence="1" type="primary">pyrF</name>
    <name type="ordered locus">COXBURSA331_A0645</name>
</gene>
<name>PYRF_COXBR</name>
<proteinExistence type="inferred from homology"/>
<accession>A9NC23</accession>
<organism>
    <name type="scientific">Coxiella burnetii (strain RSA 331 / Henzerling II)</name>
    <dbReference type="NCBI Taxonomy" id="360115"/>
    <lineage>
        <taxon>Bacteria</taxon>
        <taxon>Pseudomonadati</taxon>
        <taxon>Pseudomonadota</taxon>
        <taxon>Gammaproteobacteria</taxon>
        <taxon>Legionellales</taxon>
        <taxon>Coxiellaceae</taxon>
        <taxon>Coxiella</taxon>
    </lineage>
</organism>
<comment type="function">
    <text evidence="1">Catalyzes the decarboxylation of orotidine 5'-monophosphate (OMP) to uridine 5'-monophosphate (UMP).</text>
</comment>
<comment type="catalytic activity">
    <reaction evidence="1">
        <text>orotidine 5'-phosphate + H(+) = UMP + CO2</text>
        <dbReference type="Rhea" id="RHEA:11596"/>
        <dbReference type="ChEBI" id="CHEBI:15378"/>
        <dbReference type="ChEBI" id="CHEBI:16526"/>
        <dbReference type="ChEBI" id="CHEBI:57538"/>
        <dbReference type="ChEBI" id="CHEBI:57865"/>
        <dbReference type="EC" id="4.1.1.23"/>
    </reaction>
</comment>
<comment type="pathway">
    <text evidence="1">Pyrimidine metabolism; UMP biosynthesis via de novo pathway; UMP from orotate: step 2/2.</text>
</comment>
<comment type="subunit">
    <text evidence="1">Homodimer.</text>
</comment>
<comment type="similarity">
    <text evidence="1">Belongs to the OMP decarboxylase family. Type 1 subfamily.</text>
</comment>
<evidence type="ECO:0000255" key="1">
    <source>
        <dbReference type="HAMAP-Rule" id="MF_01200"/>
    </source>
</evidence>
<keyword id="KW-0210">Decarboxylase</keyword>
<keyword id="KW-0456">Lyase</keyword>
<keyword id="KW-0665">Pyrimidine biosynthesis</keyword>
<reference key="1">
    <citation type="submission" date="2007-11" db="EMBL/GenBank/DDBJ databases">
        <title>Genome sequencing of phylogenetically and phenotypically diverse Coxiella burnetii isolates.</title>
        <authorList>
            <person name="Seshadri R."/>
            <person name="Samuel J.E."/>
        </authorList>
    </citation>
    <scope>NUCLEOTIDE SEQUENCE [LARGE SCALE GENOMIC DNA]</scope>
    <source>
        <strain>RSA 331 / Henzerling II</strain>
    </source>
</reference>
<feature type="chain" id="PRO_1000085489" description="Orotidine 5'-phosphate decarboxylase">
    <location>
        <begin position="1"/>
        <end position="236"/>
    </location>
</feature>
<feature type="active site" description="Proton donor" evidence="1">
    <location>
        <position position="64"/>
    </location>
</feature>
<feature type="binding site" evidence="1">
    <location>
        <position position="13"/>
    </location>
    <ligand>
        <name>substrate</name>
    </ligand>
</feature>
<feature type="binding site" evidence="1">
    <location>
        <position position="35"/>
    </location>
    <ligand>
        <name>substrate</name>
    </ligand>
</feature>
<feature type="binding site" evidence="1">
    <location>
        <begin position="62"/>
        <end position="71"/>
    </location>
    <ligand>
        <name>substrate</name>
    </ligand>
</feature>
<feature type="binding site" evidence="1">
    <location>
        <position position="123"/>
    </location>
    <ligand>
        <name>substrate</name>
    </ligand>
</feature>
<feature type="binding site" evidence="1">
    <location>
        <position position="184"/>
    </location>
    <ligand>
        <name>substrate</name>
    </ligand>
</feature>
<feature type="binding site" evidence="1">
    <location>
        <position position="193"/>
    </location>
    <ligand>
        <name>substrate</name>
    </ligand>
</feature>
<feature type="binding site" evidence="1">
    <location>
        <position position="213"/>
    </location>
    <ligand>
        <name>substrate</name>
    </ligand>
</feature>
<feature type="binding site" evidence="1">
    <location>
        <position position="214"/>
    </location>
    <ligand>
        <name>substrate</name>
    </ligand>
</feature>
<dbReference type="EC" id="4.1.1.23" evidence="1"/>
<dbReference type="EMBL" id="CP000890">
    <property type="protein sequence ID" value="ABX78819.1"/>
    <property type="molecule type" value="Genomic_DNA"/>
</dbReference>
<dbReference type="RefSeq" id="WP_005771152.1">
    <property type="nucleotide sequence ID" value="NC_010117.1"/>
</dbReference>
<dbReference type="SMR" id="A9NC23"/>
<dbReference type="KEGG" id="cbs:COXBURSA331_A0645"/>
<dbReference type="HOGENOM" id="CLU_067069_0_0_6"/>
<dbReference type="UniPathway" id="UPA00070">
    <property type="reaction ID" value="UER00120"/>
</dbReference>
<dbReference type="GO" id="GO:0005829">
    <property type="term" value="C:cytosol"/>
    <property type="evidence" value="ECO:0007669"/>
    <property type="project" value="TreeGrafter"/>
</dbReference>
<dbReference type="GO" id="GO:0004590">
    <property type="term" value="F:orotidine-5'-phosphate decarboxylase activity"/>
    <property type="evidence" value="ECO:0007669"/>
    <property type="project" value="UniProtKB-UniRule"/>
</dbReference>
<dbReference type="GO" id="GO:0006207">
    <property type="term" value="P:'de novo' pyrimidine nucleobase biosynthetic process"/>
    <property type="evidence" value="ECO:0007669"/>
    <property type="project" value="InterPro"/>
</dbReference>
<dbReference type="GO" id="GO:0044205">
    <property type="term" value="P:'de novo' UMP biosynthetic process"/>
    <property type="evidence" value="ECO:0007669"/>
    <property type="project" value="UniProtKB-UniRule"/>
</dbReference>
<dbReference type="CDD" id="cd04725">
    <property type="entry name" value="OMP_decarboxylase_like"/>
    <property type="match status" value="1"/>
</dbReference>
<dbReference type="FunFam" id="3.20.20.70:FF:000015">
    <property type="entry name" value="Orotidine 5'-phosphate decarboxylase"/>
    <property type="match status" value="1"/>
</dbReference>
<dbReference type="Gene3D" id="3.20.20.70">
    <property type="entry name" value="Aldolase class I"/>
    <property type="match status" value="1"/>
</dbReference>
<dbReference type="HAMAP" id="MF_01200_B">
    <property type="entry name" value="OMPdecase_type1_B"/>
    <property type="match status" value="1"/>
</dbReference>
<dbReference type="InterPro" id="IPR013785">
    <property type="entry name" value="Aldolase_TIM"/>
</dbReference>
<dbReference type="InterPro" id="IPR014732">
    <property type="entry name" value="OMPdecase"/>
</dbReference>
<dbReference type="InterPro" id="IPR018089">
    <property type="entry name" value="OMPdecase_AS"/>
</dbReference>
<dbReference type="InterPro" id="IPR047596">
    <property type="entry name" value="OMPdecase_bac"/>
</dbReference>
<dbReference type="InterPro" id="IPR001754">
    <property type="entry name" value="OMPdeCOase_dom"/>
</dbReference>
<dbReference type="InterPro" id="IPR011060">
    <property type="entry name" value="RibuloseP-bd_barrel"/>
</dbReference>
<dbReference type="NCBIfam" id="NF001273">
    <property type="entry name" value="PRK00230.1"/>
    <property type="match status" value="1"/>
</dbReference>
<dbReference type="NCBIfam" id="TIGR01740">
    <property type="entry name" value="pyrF"/>
    <property type="match status" value="1"/>
</dbReference>
<dbReference type="PANTHER" id="PTHR32119">
    <property type="entry name" value="OROTIDINE 5'-PHOSPHATE DECARBOXYLASE"/>
    <property type="match status" value="1"/>
</dbReference>
<dbReference type="PANTHER" id="PTHR32119:SF2">
    <property type="entry name" value="OROTIDINE 5'-PHOSPHATE DECARBOXYLASE"/>
    <property type="match status" value="1"/>
</dbReference>
<dbReference type="Pfam" id="PF00215">
    <property type="entry name" value="OMPdecase"/>
    <property type="match status" value="1"/>
</dbReference>
<dbReference type="SMART" id="SM00934">
    <property type="entry name" value="OMPdecase"/>
    <property type="match status" value="1"/>
</dbReference>
<dbReference type="SUPFAM" id="SSF51366">
    <property type="entry name" value="Ribulose-phoshate binding barrel"/>
    <property type="match status" value="1"/>
</dbReference>
<dbReference type="PROSITE" id="PS00156">
    <property type="entry name" value="OMPDECASE"/>
    <property type="match status" value="1"/>
</dbReference>